<comment type="function">
    <text evidence="1">Forms part of the ribosomal stalk, playing a central role in the interaction of the ribosome with GTP-bound translation factors.</text>
</comment>
<comment type="subunit">
    <text evidence="1">Part of the ribosomal stalk of the 50S ribosomal subunit. The N-terminus interacts with L11 and the large rRNA to form the base of the stalk. The C-terminus forms an elongated spine to which L12 dimers bind in a sequential fashion forming a multimeric L10(L12)X complex.</text>
</comment>
<comment type="similarity">
    <text evidence="1">Belongs to the universal ribosomal protein uL10 family.</text>
</comment>
<evidence type="ECO:0000255" key="1">
    <source>
        <dbReference type="HAMAP-Rule" id="MF_00362"/>
    </source>
</evidence>
<evidence type="ECO:0000305" key="2"/>
<feature type="chain" id="PRO_1000005486" description="Large ribosomal subunit protein uL10">
    <location>
        <begin position="1"/>
        <end position="172"/>
    </location>
</feature>
<dbReference type="EMBL" id="CP000492">
    <property type="protein sequence ID" value="ABL64298.1"/>
    <property type="molecule type" value="Genomic_DNA"/>
</dbReference>
<dbReference type="RefSeq" id="WP_011744138.1">
    <property type="nucleotide sequence ID" value="NC_008639.1"/>
</dbReference>
<dbReference type="SMR" id="A1BD21"/>
<dbReference type="STRING" id="290317.Cpha266_0231"/>
<dbReference type="KEGG" id="cph:Cpha266_0231"/>
<dbReference type="eggNOG" id="COG0244">
    <property type="taxonomic scope" value="Bacteria"/>
</dbReference>
<dbReference type="HOGENOM" id="CLU_092227_2_1_10"/>
<dbReference type="OrthoDB" id="1523686at2"/>
<dbReference type="Proteomes" id="UP000008701">
    <property type="component" value="Chromosome"/>
</dbReference>
<dbReference type="GO" id="GO:0015934">
    <property type="term" value="C:large ribosomal subunit"/>
    <property type="evidence" value="ECO:0007669"/>
    <property type="project" value="InterPro"/>
</dbReference>
<dbReference type="GO" id="GO:0070180">
    <property type="term" value="F:large ribosomal subunit rRNA binding"/>
    <property type="evidence" value="ECO:0007669"/>
    <property type="project" value="UniProtKB-UniRule"/>
</dbReference>
<dbReference type="GO" id="GO:0003735">
    <property type="term" value="F:structural constituent of ribosome"/>
    <property type="evidence" value="ECO:0007669"/>
    <property type="project" value="InterPro"/>
</dbReference>
<dbReference type="GO" id="GO:0006412">
    <property type="term" value="P:translation"/>
    <property type="evidence" value="ECO:0007669"/>
    <property type="project" value="UniProtKB-UniRule"/>
</dbReference>
<dbReference type="CDD" id="cd05797">
    <property type="entry name" value="Ribosomal_L10"/>
    <property type="match status" value="1"/>
</dbReference>
<dbReference type="Gene3D" id="3.30.70.1730">
    <property type="match status" value="1"/>
</dbReference>
<dbReference type="Gene3D" id="6.10.250.290">
    <property type="match status" value="1"/>
</dbReference>
<dbReference type="HAMAP" id="MF_00362">
    <property type="entry name" value="Ribosomal_uL10"/>
    <property type="match status" value="1"/>
</dbReference>
<dbReference type="InterPro" id="IPR001790">
    <property type="entry name" value="Ribosomal_uL10"/>
</dbReference>
<dbReference type="InterPro" id="IPR043141">
    <property type="entry name" value="Ribosomal_uL10-like_sf"/>
</dbReference>
<dbReference type="InterPro" id="IPR022973">
    <property type="entry name" value="Ribosomal_uL10_bac"/>
</dbReference>
<dbReference type="InterPro" id="IPR047865">
    <property type="entry name" value="Ribosomal_uL10_bac_type"/>
</dbReference>
<dbReference type="InterPro" id="IPR002363">
    <property type="entry name" value="Ribosomal_uL10_CS_bac"/>
</dbReference>
<dbReference type="NCBIfam" id="NF000955">
    <property type="entry name" value="PRK00099.1-1"/>
    <property type="match status" value="1"/>
</dbReference>
<dbReference type="PANTHER" id="PTHR11560">
    <property type="entry name" value="39S RIBOSOMAL PROTEIN L10, MITOCHONDRIAL"/>
    <property type="match status" value="1"/>
</dbReference>
<dbReference type="Pfam" id="PF00466">
    <property type="entry name" value="Ribosomal_L10"/>
    <property type="match status" value="1"/>
</dbReference>
<dbReference type="SUPFAM" id="SSF160369">
    <property type="entry name" value="Ribosomal protein L10-like"/>
    <property type="match status" value="1"/>
</dbReference>
<dbReference type="PROSITE" id="PS01109">
    <property type="entry name" value="RIBOSOMAL_L10"/>
    <property type="match status" value="1"/>
</dbReference>
<proteinExistence type="inferred from homology"/>
<reference key="1">
    <citation type="submission" date="2006-12" db="EMBL/GenBank/DDBJ databases">
        <title>Complete sequence of Chlorobium phaeobacteroides DSM 266.</title>
        <authorList>
            <consortium name="US DOE Joint Genome Institute"/>
            <person name="Copeland A."/>
            <person name="Lucas S."/>
            <person name="Lapidus A."/>
            <person name="Barry K."/>
            <person name="Detter J.C."/>
            <person name="Glavina del Rio T."/>
            <person name="Hammon N."/>
            <person name="Israni S."/>
            <person name="Pitluck S."/>
            <person name="Goltsman E."/>
            <person name="Schmutz J."/>
            <person name="Larimer F."/>
            <person name="Land M."/>
            <person name="Hauser L."/>
            <person name="Mikhailova N."/>
            <person name="Li T."/>
            <person name="Overmann J."/>
            <person name="Bryant D.A."/>
            <person name="Richardson P."/>
        </authorList>
    </citation>
    <scope>NUCLEOTIDE SEQUENCE [LARGE SCALE GENOMIC DNA]</scope>
    <source>
        <strain>DSM 266 / SMG 266 / 2430</strain>
    </source>
</reference>
<organism>
    <name type="scientific">Chlorobium phaeobacteroides (strain DSM 266 / SMG 266 / 2430)</name>
    <dbReference type="NCBI Taxonomy" id="290317"/>
    <lineage>
        <taxon>Bacteria</taxon>
        <taxon>Pseudomonadati</taxon>
        <taxon>Chlorobiota</taxon>
        <taxon>Chlorobiia</taxon>
        <taxon>Chlorobiales</taxon>
        <taxon>Chlorobiaceae</taxon>
        <taxon>Chlorobium/Pelodictyon group</taxon>
        <taxon>Chlorobium</taxon>
    </lineage>
</organism>
<gene>
    <name evidence="1" type="primary">rplJ</name>
    <name type="ordered locus">Cpha266_0231</name>
</gene>
<sequence>MKRDKKEQIVQDVAEKIDRSQGIYLTEFQGLSVAKMAELRNEFRKAGVEYRVVKNTLIKKALRDLSSADRLASGLKSTTAVAFGYDDPLAPAKIIRKFSKTNEALKFKMASIDGVVYDADSLPALSEMLSKTENIGRAAGLINGVVSSVPMVVNAVARNLVSVLDQIAKQKQ</sequence>
<name>RL10_CHLPD</name>
<keyword id="KW-1185">Reference proteome</keyword>
<keyword id="KW-0687">Ribonucleoprotein</keyword>
<keyword id="KW-0689">Ribosomal protein</keyword>
<keyword id="KW-0694">RNA-binding</keyword>
<keyword id="KW-0699">rRNA-binding</keyword>
<protein>
    <recommendedName>
        <fullName evidence="1">Large ribosomal subunit protein uL10</fullName>
    </recommendedName>
    <alternativeName>
        <fullName evidence="2">50S ribosomal protein L10</fullName>
    </alternativeName>
</protein>
<accession>A1BD21</accession>